<name>MURA_PROM9</name>
<comment type="function">
    <text evidence="1">Cell wall formation. Adds enolpyruvyl to UDP-N-acetylglucosamine.</text>
</comment>
<comment type="catalytic activity">
    <reaction evidence="1">
        <text>phosphoenolpyruvate + UDP-N-acetyl-alpha-D-glucosamine = UDP-N-acetyl-3-O-(1-carboxyvinyl)-alpha-D-glucosamine + phosphate</text>
        <dbReference type="Rhea" id="RHEA:18681"/>
        <dbReference type="ChEBI" id="CHEBI:43474"/>
        <dbReference type="ChEBI" id="CHEBI:57705"/>
        <dbReference type="ChEBI" id="CHEBI:58702"/>
        <dbReference type="ChEBI" id="CHEBI:68483"/>
        <dbReference type="EC" id="2.5.1.7"/>
    </reaction>
</comment>
<comment type="pathway">
    <text evidence="1">Cell wall biogenesis; peptidoglycan biosynthesis.</text>
</comment>
<comment type="subcellular location">
    <subcellularLocation>
        <location evidence="1">Cytoplasm</location>
    </subcellularLocation>
</comment>
<comment type="similarity">
    <text evidence="1">Belongs to the EPSP synthase family. MurA subfamily.</text>
</comment>
<protein>
    <recommendedName>
        <fullName evidence="1">UDP-N-acetylglucosamine 1-carboxyvinyltransferase</fullName>
        <ecNumber evidence="1">2.5.1.7</ecNumber>
    </recommendedName>
    <alternativeName>
        <fullName evidence="1">Enoylpyruvate transferase</fullName>
    </alternativeName>
    <alternativeName>
        <fullName evidence="1">UDP-N-acetylglucosamine enolpyruvyl transferase</fullName>
        <shortName evidence="1">EPT</shortName>
    </alternativeName>
</protein>
<accession>Q319I9</accession>
<keyword id="KW-0131">Cell cycle</keyword>
<keyword id="KW-0132">Cell division</keyword>
<keyword id="KW-0133">Cell shape</keyword>
<keyword id="KW-0961">Cell wall biogenesis/degradation</keyword>
<keyword id="KW-0963">Cytoplasm</keyword>
<keyword id="KW-0573">Peptidoglycan synthesis</keyword>
<keyword id="KW-0670">Pyruvate</keyword>
<keyword id="KW-0808">Transferase</keyword>
<organism>
    <name type="scientific">Prochlorococcus marinus (strain MIT 9312)</name>
    <dbReference type="NCBI Taxonomy" id="74546"/>
    <lineage>
        <taxon>Bacteria</taxon>
        <taxon>Bacillati</taxon>
        <taxon>Cyanobacteriota</taxon>
        <taxon>Cyanophyceae</taxon>
        <taxon>Synechococcales</taxon>
        <taxon>Prochlorococcaceae</taxon>
        <taxon>Prochlorococcus</taxon>
    </lineage>
</organism>
<sequence>MICGSKKKAYLKSQNLKILGQGKLNGIVKINGAKNSALVLLASSLLTNEKIILENIPYLTDIEKMGNILKNLGVNLIDKNDQLEIDPTNISIKELPYELVNGLRASFFCIGALLTKFGEAQVPLPGGCNIGSRPIDEHINGLIALGADIIIEEGIVKAKIRGNKNKLHGTHIKLKCPSVGATETLIMAASLAEGRTTIENAAREPEIQDLCHMLNKMGAKIYDSGKETIIIDGVNKLGGCTHKVIPDRIEAGTFLIAAAATSSSITISPVIPHHLEAVTNKLQESGSKITIKGNSISIKSKEIKGVDIETAPFPGFPTDLQAPFTALMTIANGESKITETIFENRMNHIHLLNKMGARIKLNENVAYIKGVKTLNGMDLIGSDLRSSAALIIAGIIAEGTSNIYGLEHLDRGYENFELKLKKLGIKITREFNKSTFEENEFKIEPKSEDISNLRAA</sequence>
<evidence type="ECO:0000255" key="1">
    <source>
        <dbReference type="HAMAP-Rule" id="MF_00111"/>
    </source>
</evidence>
<proteinExistence type="inferred from homology"/>
<reference key="1">
    <citation type="journal article" date="2006" name="Science">
        <title>Genomic islands and the ecology and evolution of Prochlorococcus.</title>
        <authorList>
            <person name="Coleman M.L."/>
            <person name="Sullivan M.B."/>
            <person name="Martiny A.C."/>
            <person name="Steglich C."/>
            <person name="Barry K."/>
            <person name="Delong E.F."/>
            <person name="Chisholm S.W."/>
        </authorList>
    </citation>
    <scope>NUCLEOTIDE SEQUENCE [LARGE SCALE GENOMIC DNA]</scope>
    <source>
        <strain>MIT 9312</strain>
    </source>
</reference>
<dbReference type="EC" id="2.5.1.7" evidence="1"/>
<dbReference type="EMBL" id="CP000111">
    <property type="protein sequence ID" value="ABB50456.1"/>
    <property type="molecule type" value="Genomic_DNA"/>
</dbReference>
<dbReference type="RefSeq" id="WP_011376942.1">
    <property type="nucleotide sequence ID" value="NC_007577.1"/>
</dbReference>
<dbReference type="SMR" id="Q319I9"/>
<dbReference type="STRING" id="74546.PMT9312_1396"/>
<dbReference type="KEGG" id="pmi:PMT9312_1396"/>
<dbReference type="eggNOG" id="COG0766">
    <property type="taxonomic scope" value="Bacteria"/>
</dbReference>
<dbReference type="HOGENOM" id="CLU_027387_0_0_3"/>
<dbReference type="OrthoDB" id="9803760at2"/>
<dbReference type="UniPathway" id="UPA00219"/>
<dbReference type="Proteomes" id="UP000002715">
    <property type="component" value="Chromosome"/>
</dbReference>
<dbReference type="GO" id="GO:0005737">
    <property type="term" value="C:cytoplasm"/>
    <property type="evidence" value="ECO:0007669"/>
    <property type="project" value="UniProtKB-SubCell"/>
</dbReference>
<dbReference type="GO" id="GO:0008760">
    <property type="term" value="F:UDP-N-acetylglucosamine 1-carboxyvinyltransferase activity"/>
    <property type="evidence" value="ECO:0007669"/>
    <property type="project" value="UniProtKB-UniRule"/>
</dbReference>
<dbReference type="GO" id="GO:0051301">
    <property type="term" value="P:cell division"/>
    <property type="evidence" value="ECO:0007669"/>
    <property type="project" value="UniProtKB-KW"/>
</dbReference>
<dbReference type="GO" id="GO:0071555">
    <property type="term" value="P:cell wall organization"/>
    <property type="evidence" value="ECO:0007669"/>
    <property type="project" value="UniProtKB-KW"/>
</dbReference>
<dbReference type="GO" id="GO:0009252">
    <property type="term" value="P:peptidoglycan biosynthetic process"/>
    <property type="evidence" value="ECO:0007669"/>
    <property type="project" value="UniProtKB-UniRule"/>
</dbReference>
<dbReference type="GO" id="GO:0008360">
    <property type="term" value="P:regulation of cell shape"/>
    <property type="evidence" value="ECO:0007669"/>
    <property type="project" value="UniProtKB-KW"/>
</dbReference>
<dbReference type="GO" id="GO:0019277">
    <property type="term" value="P:UDP-N-acetylgalactosamine biosynthetic process"/>
    <property type="evidence" value="ECO:0007669"/>
    <property type="project" value="InterPro"/>
</dbReference>
<dbReference type="CDD" id="cd01555">
    <property type="entry name" value="UdpNAET"/>
    <property type="match status" value="1"/>
</dbReference>
<dbReference type="FunFam" id="3.65.10.10:FF:000001">
    <property type="entry name" value="UDP-N-acetylglucosamine 1-carboxyvinyltransferase"/>
    <property type="match status" value="1"/>
</dbReference>
<dbReference type="Gene3D" id="3.65.10.10">
    <property type="entry name" value="Enolpyruvate transferase domain"/>
    <property type="match status" value="2"/>
</dbReference>
<dbReference type="HAMAP" id="MF_00111">
    <property type="entry name" value="MurA"/>
    <property type="match status" value="1"/>
</dbReference>
<dbReference type="InterPro" id="IPR001986">
    <property type="entry name" value="Enolpyruvate_Tfrase_dom"/>
</dbReference>
<dbReference type="InterPro" id="IPR036968">
    <property type="entry name" value="Enolpyruvate_Tfrase_sf"/>
</dbReference>
<dbReference type="InterPro" id="IPR050068">
    <property type="entry name" value="MurA_subfamily"/>
</dbReference>
<dbReference type="InterPro" id="IPR013792">
    <property type="entry name" value="RNA3'P_cycl/enolpyr_Trfase_a/b"/>
</dbReference>
<dbReference type="InterPro" id="IPR005750">
    <property type="entry name" value="UDP_GlcNAc_COvinyl_MurA"/>
</dbReference>
<dbReference type="NCBIfam" id="TIGR01072">
    <property type="entry name" value="murA"/>
    <property type="match status" value="1"/>
</dbReference>
<dbReference type="NCBIfam" id="NF006873">
    <property type="entry name" value="PRK09369.1"/>
    <property type="match status" value="1"/>
</dbReference>
<dbReference type="PANTHER" id="PTHR43783">
    <property type="entry name" value="UDP-N-ACETYLGLUCOSAMINE 1-CARBOXYVINYLTRANSFERASE"/>
    <property type="match status" value="1"/>
</dbReference>
<dbReference type="PANTHER" id="PTHR43783:SF1">
    <property type="entry name" value="UDP-N-ACETYLGLUCOSAMINE 1-CARBOXYVINYLTRANSFERASE"/>
    <property type="match status" value="1"/>
</dbReference>
<dbReference type="Pfam" id="PF00275">
    <property type="entry name" value="EPSP_synthase"/>
    <property type="match status" value="1"/>
</dbReference>
<dbReference type="SUPFAM" id="SSF55205">
    <property type="entry name" value="EPT/RTPC-like"/>
    <property type="match status" value="1"/>
</dbReference>
<feature type="chain" id="PRO_0000231242" description="UDP-N-acetylglucosamine 1-carboxyvinyltransferase">
    <location>
        <begin position="1"/>
        <end position="456"/>
    </location>
</feature>
<feature type="active site" description="Proton donor" evidence="1">
    <location>
        <position position="128"/>
    </location>
</feature>
<feature type="binding site" evidence="1">
    <location>
        <begin position="34"/>
        <end position="35"/>
    </location>
    <ligand>
        <name>phosphoenolpyruvate</name>
        <dbReference type="ChEBI" id="CHEBI:58702"/>
    </ligand>
</feature>
<feature type="binding site" evidence="1">
    <location>
        <position position="104"/>
    </location>
    <ligand>
        <name>UDP-N-acetyl-alpha-D-glucosamine</name>
        <dbReference type="ChEBI" id="CHEBI:57705"/>
    </ligand>
</feature>
<feature type="binding site" evidence="1">
    <location>
        <position position="319"/>
    </location>
    <ligand>
        <name>UDP-N-acetyl-alpha-D-glucosamine</name>
        <dbReference type="ChEBI" id="CHEBI:57705"/>
    </ligand>
</feature>
<feature type="binding site" evidence="1">
    <location>
        <position position="341"/>
    </location>
    <ligand>
        <name>UDP-N-acetyl-alpha-D-glucosamine</name>
        <dbReference type="ChEBI" id="CHEBI:57705"/>
    </ligand>
</feature>
<feature type="modified residue" description="2-(S-cysteinyl)pyruvic acid O-phosphothioketal" evidence="1">
    <location>
        <position position="128"/>
    </location>
</feature>
<gene>
    <name evidence="1" type="primary">murA</name>
    <name type="ordered locus">PMT9312_1396</name>
</gene>